<proteinExistence type="inferred from homology"/>
<sequence length="1249" mass="144509">MEEVITIAQIVHRGTDILSLNNEEIEALVDEIRSTLKGSNDIKNIRLIDFLFTLKDFVNHVRAEQSKLPNLSMPMEAYIRQLLVNPDVIPIVSEKKKELRVRPSTRKEIFLINGTHLAVPAEVPIEIYGLKLRLKTFSPQCFMRMAEIGSFLPETLGYVASGANLTNFIRVFMKCVDQETWKKNGEGIVVTTKENIIQFTHQYIELYKFLRSGGHSWLINRLAEEMVHRKLDREDQGSHISSVIETEEIEPEENIKRVIFFLKELSTMYSVFPVFTSGYMPLLYDLYRAGYLEVLWNPVEQKFLQHAEQREKEQMILQQVDMKLTEVTTQARQYFKIMEEKIGRVQSDAIREILTMEGKVDDPNSILQEVIKACGKQEAELITTEYLNIKKQWELQEKNACAHLKLVKQLRSGLQYAESLKVLESIRVLYKEKNNTTNWNLCKACGFKLLCPHVDMLIQLQAAEASYDTMRTKLMKFSGINKEKENNQGLIYSYFCKICGEELAHFVQEDRTADVGVIGDLNSKLRIFIWQETMKACTFIHFGKLVDVKQFANIAVNVCLPLIYNIENIKKEEDYDPLTQLYAVIYIYAYILNLIYSSQKNKEFLTITIHGMKADSSLNAYVTFLLEKMTQQYSGIINQLSEITDQWIANNFREAFKKIIHQNGLQGLSVQDDTKVLLTEILLDPLYDYAATVARIDGSIPMHKPQTPKEAEYEFKTVIGRTPTELLSQKEFYDKIYTFKYRPDFTQLARLNDIYFQEESLRVWWGGRDEEKISTLIYLKAYELFLKYLQNAPNFNLELAEFKKYENAYGEQRALLAQQGFYNIFDPNTGRADQRTRLFEYKKLPISTLYDEKGLPHKWTIYVYKAIDSSQKPAEIEVSRKDVIKKIDNHYALADLRCSVCHVLQHEVGQLNIKKVQTALKASLEFNTFYAFYESRCPKGGLHDFQDKKCVKCGLFTYIIYDHLSQPELVHDYYNNYKDQYDKEKMSIHSIQMKKDIAVPSAETQPEPQQEPWTFDYGKIIKTAKILDISPAVIEAIGAMEGRSYADIKEGQGAPPPPTSMDDPRLMAVDSAVRIFLYNYNCLRHISTFNKPPMYIERLVKHLSYEEKEDLEKVLPNVVNEYHTTFKQLRVTDPASALLYSIEFLCISFLTLYEIKEPSWVVNIIREFALTELNTIIQSEKLLSKPGAFNFMIFGEDFVCSGEDSSMDDISAYSSPGLFGEDIIDQLDDPFSIEDVDISLDVLDNLAPQ</sequence>
<accession>P0CAB4</accession>
<keyword id="KW-1035">Host cytoplasm</keyword>
<keyword id="KW-0945">Host-virus interaction</keyword>
<keyword id="KW-1090">Inhibition of host innate immune response by virus</keyword>
<keyword id="KW-1092">Inhibition of host IRF3 by virus</keyword>
<keyword id="KW-1113">Inhibition of host RLR pathway by virus</keyword>
<keyword id="KW-0426">Late protein</keyword>
<keyword id="KW-0899">Viral immunoevasion</keyword>
<keyword id="KW-0946">Virion</keyword>
<comment type="function">
    <text evidence="1">Together with the penton and the other minor capsid proteins (p17, p49), forms a complicated network immediately below the outer capsid shell, stabilizing the whole capsid. In addition, blocks IFN-beta transactivation mediated by the cGAS-STING pathway and regulates the transcriptional activity of IFN-beta. Mechanistically, suppresses the phosphorylation of host key adapter protein TBK1 and degrades host IRF3 in the cytoplasm.</text>
</comment>
<comment type="subunit">
    <text evidence="1">Interacts with the minor capsid protein p17 and with the hexon capsid protein p72 capsomers; these interactions form a rigid zipper structure that stabilizes the capsomers. Interacts with host IRF3.</text>
</comment>
<comment type="subcellular location">
    <subcellularLocation>
        <location evidence="1">Virion</location>
    </subcellularLocation>
    <subcellularLocation>
        <location evidence="1">Host cytoplasm</location>
    </subcellularLocation>
</comment>
<comment type="induction">
    <text evidence="2">Expressed in the late phase of the viral replicative cycle.</text>
</comment>
<comment type="similarity">
    <text evidence="2">Belongs to the asfivirus M1249L family.</text>
</comment>
<protein>
    <recommendedName>
        <fullName evidence="1">Minor capsid protein M1249L</fullName>
        <shortName>pM1249L</shortName>
    </recommendedName>
</protein>
<dbReference type="EMBL" id="AY261361">
    <property type="status" value="NOT_ANNOTATED_CDS"/>
    <property type="molecule type" value="Genomic_DNA"/>
</dbReference>
<dbReference type="SMR" id="P0CAB4"/>
<dbReference type="Proteomes" id="UP000000860">
    <property type="component" value="Segment"/>
</dbReference>
<dbReference type="GO" id="GO:0030430">
    <property type="term" value="C:host cell cytoplasm"/>
    <property type="evidence" value="ECO:0007669"/>
    <property type="project" value="UniProtKB-SubCell"/>
</dbReference>
<dbReference type="GO" id="GO:0044423">
    <property type="term" value="C:virion component"/>
    <property type="evidence" value="ECO:0007669"/>
    <property type="project" value="UniProtKB-KW"/>
</dbReference>
<dbReference type="GO" id="GO:0039548">
    <property type="term" value="P:symbiont-mediated suppression of host cytoplasmic pattern recognition receptor signaling pathway via inhibition of IRF3 activity"/>
    <property type="evidence" value="ECO:0007669"/>
    <property type="project" value="UniProtKB-KW"/>
</dbReference>
<feature type="chain" id="PRO_0000373611" description="Minor capsid protein M1249L">
    <location>
        <begin position="1"/>
        <end position="1249"/>
    </location>
</feature>
<evidence type="ECO:0000250" key="1">
    <source>
        <dbReference type="UniProtKB" id="Q65152"/>
    </source>
</evidence>
<evidence type="ECO:0000305" key="2"/>
<gene>
    <name type="ordered locus">Mal-068</name>
</gene>
<name>M1249_ASFM2</name>
<organism>
    <name type="scientific">African swine fever virus (isolate Tick/Malawi/Lil 20-1/1983)</name>
    <name type="common">ASFV</name>
    <dbReference type="NCBI Taxonomy" id="10500"/>
    <lineage>
        <taxon>Viruses</taxon>
        <taxon>Varidnaviria</taxon>
        <taxon>Bamfordvirae</taxon>
        <taxon>Nucleocytoviricota</taxon>
        <taxon>Pokkesviricetes</taxon>
        <taxon>Asfuvirales</taxon>
        <taxon>Asfarviridae</taxon>
        <taxon>Asfivirus</taxon>
        <taxon>African swine fever virus</taxon>
    </lineage>
</organism>
<reference key="1">
    <citation type="submission" date="2003-03" db="EMBL/GenBank/DDBJ databases">
        <title>African swine fever virus genomes.</title>
        <authorList>
            <person name="Kutish G.F."/>
            <person name="Rock D.L."/>
        </authorList>
    </citation>
    <scope>NUCLEOTIDE SEQUENCE [LARGE SCALE GENOMIC DNA]</scope>
</reference>
<organismHost>
    <name type="scientific">Ornithodoros</name>
    <name type="common">relapsing fever ticks</name>
    <dbReference type="NCBI Taxonomy" id="6937"/>
</organismHost>
<organismHost>
    <name type="scientific">Phacochoerus aethiopicus</name>
    <name type="common">Warthog</name>
    <dbReference type="NCBI Taxonomy" id="85517"/>
</organismHost>
<organismHost>
    <name type="scientific">Phacochoerus africanus</name>
    <name type="common">Warthog</name>
    <dbReference type="NCBI Taxonomy" id="41426"/>
</organismHost>
<organismHost>
    <name type="scientific">Potamochoerus larvatus</name>
    <name type="common">Bushpig</name>
    <dbReference type="NCBI Taxonomy" id="273792"/>
</organismHost>
<organismHost>
    <name type="scientific">Sus scrofa</name>
    <name type="common">Pig</name>
    <dbReference type="NCBI Taxonomy" id="9823"/>
</organismHost>